<proteinExistence type="inferred from homology"/>
<reference key="1">
    <citation type="submission" date="2007-03" db="EMBL/GenBank/DDBJ databases">
        <title>Complete sequence of chromosome of Methanococcus maripaludis C5.</title>
        <authorList>
            <consortium name="US DOE Joint Genome Institute"/>
            <person name="Copeland A."/>
            <person name="Lucas S."/>
            <person name="Lapidus A."/>
            <person name="Barry K."/>
            <person name="Glavina del Rio T."/>
            <person name="Dalin E."/>
            <person name="Tice H."/>
            <person name="Pitluck S."/>
            <person name="Chertkov O."/>
            <person name="Brettin T."/>
            <person name="Bruce D."/>
            <person name="Han C."/>
            <person name="Detter J.C."/>
            <person name="Schmutz J."/>
            <person name="Larimer F."/>
            <person name="Land M."/>
            <person name="Hauser L."/>
            <person name="Kyrpides N."/>
            <person name="Mikhailova N."/>
            <person name="Sieprawska-Lupa M."/>
            <person name="Whitman W.B."/>
            <person name="Richardson P."/>
        </authorList>
    </citation>
    <scope>NUCLEOTIDE SEQUENCE [LARGE SCALE GENOMIC DNA]</scope>
    <source>
        <strain>C5 / ATCC BAA-1333</strain>
    </source>
</reference>
<organism>
    <name type="scientific">Methanococcus maripaludis (strain C5 / ATCC BAA-1333)</name>
    <dbReference type="NCBI Taxonomy" id="402880"/>
    <lineage>
        <taxon>Archaea</taxon>
        <taxon>Methanobacteriati</taxon>
        <taxon>Methanobacteriota</taxon>
        <taxon>Methanomada group</taxon>
        <taxon>Methanococci</taxon>
        <taxon>Methanococcales</taxon>
        <taxon>Methanococcaceae</taxon>
        <taxon>Methanococcus</taxon>
    </lineage>
</organism>
<dbReference type="EMBL" id="CP000609">
    <property type="protein sequence ID" value="ABO34691.1"/>
    <property type="molecule type" value="Genomic_DNA"/>
</dbReference>
<dbReference type="RefSeq" id="WP_011868146.1">
    <property type="nucleotide sequence ID" value="NC_009135.1"/>
</dbReference>
<dbReference type="STRING" id="402880.MmarC5_0375"/>
<dbReference type="GeneID" id="4928436"/>
<dbReference type="KEGG" id="mmq:MmarC5_0375"/>
<dbReference type="eggNOG" id="arCOG00105">
    <property type="taxonomic scope" value="Archaea"/>
</dbReference>
<dbReference type="HOGENOM" id="CLU_019250_2_2_2"/>
<dbReference type="OrthoDB" id="53136at2157"/>
<dbReference type="UniPathway" id="UPA00148"/>
<dbReference type="Proteomes" id="UP000000253">
    <property type="component" value="Chromosome"/>
</dbReference>
<dbReference type="GO" id="GO:0015420">
    <property type="term" value="F:ABC-type vitamin B12 transporter activity"/>
    <property type="evidence" value="ECO:0007669"/>
    <property type="project" value="UniProtKB-UniRule"/>
</dbReference>
<dbReference type="GO" id="GO:0003824">
    <property type="term" value="F:catalytic activity"/>
    <property type="evidence" value="ECO:0007669"/>
    <property type="project" value="InterPro"/>
</dbReference>
<dbReference type="GO" id="GO:0009236">
    <property type="term" value="P:cobalamin biosynthetic process"/>
    <property type="evidence" value="ECO:0007669"/>
    <property type="project" value="UniProtKB-UniRule"/>
</dbReference>
<dbReference type="CDD" id="cd05389">
    <property type="entry name" value="CobQ_N"/>
    <property type="match status" value="1"/>
</dbReference>
<dbReference type="CDD" id="cd01750">
    <property type="entry name" value="GATase1_CobQ"/>
    <property type="match status" value="1"/>
</dbReference>
<dbReference type="Gene3D" id="3.40.50.880">
    <property type="match status" value="1"/>
</dbReference>
<dbReference type="Gene3D" id="3.40.50.300">
    <property type="entry name" value="P-loop containing nucleotide triphosphate hydrolases"/>
    <property type="match status" value="1"/>
</dbReference>
<dbReference type="HAMAP" id="MF_00028">
    <property type="entry name" value="CobQ"/>
    <property type="match status" value="1"/>
</dbReference>
<dbReference type="InterPro" id="IPR029062">
    <property type="entry name" value="Class_I_gatase-like"/>
</dbReference>
<dbReference type="InterPro" id="IPR002586">
    <property type="entry name" value="CobQ/CobB/MinD/ParA_Nub-bd_dom"/>
</dbReference>
<dbReference type="InterPro" id="IPR033949">
    <property type="entry name" value="CobQ_GATase1"/>
</dbReference>
<dbReference type="InterPro" id="IPR047045">
    <property type="entry name" value="CobQ_N"/>
</dbReference>
<dbReference type="InterPro" id="IPR004459">
    <property type="entry name" value="CobQ_synth"/>
</dbReference>
<dbReference type="InterPro" id="IPR011698">
    <property type="entry name" value="GATase_3"/>
</dbReference>
<dbReference type="InterPro" id="IPR027417">
    <property type="entry name" value="P-loop_NTPase"/>
</dbReference>
<dbReference type="NCBIfam" id="TIGR00313">
    <property type="entry name" value="cobQ"/>
    <property type="match status" value="1"/>
</dbReference>
<dbReference type="NCBIfam" id="NF001989">
    <property type="entry name" value="PRK00784.1"/>
    <property type="match status" value="1"/>
</dbReference>
<dbReference type="PANTHER" id="PTHR21343:SF1">
    <property type="entry name" value="COBYRIC ACID SYNTHASE"/>
    <property type="match status" value="1"/>
</dbReference>
<dbReference type="PANTHER" id="PTHR21343">
    <property type="entry name" value="DETHIOBIOTIN SYNTHETASE"/>
    <property type="match status" value="1"/>
</dbReference>
<dbReference type="Pfam" id="PF01656">
    <property type="entry name" value="CbiA"/>
    <property type="match status" value="1"/>
</dbReference>
<dbReference type="Pfam" id="PF07685">
    <property type="entry name" value="GATase_3"/>
    <property type="match status" value="1"/>
</dbReference>
<dbReference type="SUPFAM" id="SSF52317">
    <property type="entry name" value="Class I glutamine amidotransferase-like"/>
    <property type="match status" value="1"/>
</dbReference>
<dbReference type="SUPFAM" id="SSF52540">
    <property type="entry name" value="P-loop containing nucleoside triphosphate hydrolases"/>
    <property type="match status" value="1"/>
</dbReference>
<dbReference type="PROSITE" id="PS51274">
    <property type="entry name" value="GATASE_COBBQ"/>
    <property type="match status" value="1"/>
</dbReference>
<feature type="chain" id="PRO_1000002364" description="Probable cobyric acid synthase">
    <location>
        <begin position="1"/>
        <end position="492"/>
    </location>
</feature>
<feature type="domain" description="GATase cobBQ-type" evidence="1">
    <location>
        <begin position="252"/>
        <end position="444"/>
    </location>
</feature>
<feature type="active site" description="Nucleophile" evidence="1">
    <location>
        <position position="330"/>
    </location>
</feature>
<feature type="active site" evidence="1">
    <location>
        <position position="436"/>
    </location>
</feature>
<name>COBQ_METM5</name>
<sequence>MAKFIMVVGTSSNSGKTVLVSGICRMLSNKGYKVAPFKSQNMSLNSRVSIEDGEIAVAQYTQAMAARSEPSVHFNPILLKPKGNFVSQVIVHGIPYEDRDYNEYRSKKDDFLDKIKQSINYLDKNYDYVVIEGAGSCCEINLLKDDIANLRVAEIAGADAILVSDIDRGGVFASIYGTVQLLPENWRNLLKGFVINKFRGNIDVLKDGFEKIEELTKIPVIGTILYDETLILPEEDSQALEGKRVFGNVKSPIEVNIVKFSKIANFTDVDPLSSDCLMKYIDFNDDITGDILILPGTRCSTVEMDLMKKHGLDKKILEFVENGGIVLGICGGYQTLGKMLIDEDFSEGDIGTISGLGLFDMETTFGNEKAIKNSTGTISIFDQNFNVTGYELHEGHSVSNETPLISLSRGFGNCGDSYDGSFKIIGNSYIFGTYFHGILENFEFRNYLVNFVRHKKNLSKIENDNYAEIFNENMDKLSKLVEESLDLSKIIK</sequence>
<comment type="function">
    <text evidence="1">Catalyzes amidations at positions B, D, E, and G on adenosylcobyrinic A,C-diamide. NH(2) groups are provided by glutamine, and one molecule of ATP is hydrogenolyzed for each amidation.</text>
</comment>
<comment type="pathway">
    <text evidence="1">Cofactor biosynthesis; adenosylcobalamin biosynthesis.</text>
</comment>
<comment type="similarity">
    <text evidence="1">Belongs to the CobB/CobQ family. CobQ subfamily.</text>
</comment>
<protein>
    <recommendedName>
        <fullName evidence="1">Probable cobyric acid synthase</fullName>
    </recommendedName>
</protein>
<evidence type="ECO:0000255" key="1">
    <source>
        <dbReference type="HAMAP-Rule" id="MF_00028"/>
    </source>
</evidence>
<keyword id="KW-0169">Cobalamin biosynthesis</keyword>
<keyword id="KW-0315">Glutamine amidotransferase</keyword>
<gene>
    <name evidence="1" type="primary">cobQ</name>
    <name type="ordered locus">MmarC5_0375</name>
</gene>
<accession>A4FWW2</accession>